<feature type="chain" id="PRO_1000064182" description="Glycerol-3-phosphate acyltransferase">
    <location>
        <begin position="1"/>
        <end position="199"/>
    </location>
</feature>
<feature type="transmembrane region" description="Helical" evidence="1">
    <location>
        <begin position="4"/>
        <end position="24"/>
    </location>
</feature>
<feature type="transmembrane region" description="Helical" evidence="1">
    <location>
        <begin position="56"/>
        <end position="76"/>
    </location>
</feature>
<feature type="transmembrane region" description="Helical" evidence="1">
    <location>
        <begin position="80"/>
        <end position="100"/>
    </location>
</feature>
<feature type="transmembrane region" description="Helical" evidence="1">
    <location>
        <begin position="115"/>
        <end position="135"/>
    </location>
</feature>
<feature type="transmembrane region" description="Helical" evidence="1">
    <location>
        <begin position="154"/>
        <end position="176"/>
    </location>
</feature>
<organism>
    <name type="scientific">Haemophilus influenzae (strain PittGG)</name>
    <dbReference type="NCBI Taxonomy" id="374931"/>
    <lineage>
        <taxon>Bacteria</taxon>
        <taxon>Pseudomonadati</taxon>
        <taxon>Pseudomonadota</taxon>
        <taxon>Gammaproteobacteria</taxon>
        <taxon>Pasteurellales</taxon>
        <taxon>Pasteurellaceae</taxon>
        <taxon>Haemophilus</taxon>
    </lineage>
</organism>
<comment type="function">
    <text evidence="1">Catalyzes the transfer of an acyl group from acyl-phosphate (acyl-PO(4)) to glycerol-3-phosphate (G3P) to form lysophosphatidic acid (LPA). This enzyme utilizes acyl-phosphate as fatty acyl donor, but not acyl-CoA or acyl-ACP.</text>
</comment>
<comment type="catalytic activity">
    <reaction evidence="1">
        <text>an acyl phosphate + sn-glycerol 3-phosphate = a 1-acyl-sn-glycero-3-phosphate + phosphate</text>
        <dbReference type="Rhea" id="RHEA:34075"/>
        <dbReference type="ChEBI" id="CHEBI:43474"/>
        <dbReference type="ChEBI" id="CHEBI:57597"/>
        <dbReference type="ChEBI" id="CHEBI:57970"/>
        <dbReference type="ChEBI" id="CHEBI:59918"/>
        <dbReference type="EC" id="2.3.1.275"/>
    </reaction>
</comment>
<comment type="pathway">
    <text evidence="1">Lipid metabolism; phospholipid metabolism.</text>
</comment>
<comment type="subunit">
    <text evidence="1">Probably interacts with PlsX.</text>
</comment>
<comment type="subcellular location">
    <subcellularLocation>
        <location evidence="1">Cell inner membrane</location>
        <topology evidence="1">Multi-pass membrane protein</topology>
    </subcellularLocation>
</comment>
<comment type="similarity">
    <text evidence="1">Belongs to the PlsY family.</text>
</comment>
<accession>A5UG86</accession>
<name>PLSY_HAEIG</name>
<evidence type="ECO:0000255" key="1">
    <source>
        <dbReference type="HAMAP-Rule" id="MF_01043"/>
    </source>
</evidence>
<reference key="1">
    <citation type="journal article" date="2007" name="Genome Biol.">
        <title>Characterization and modeling of the Haemophilus influenzae core and supragenomes based on the complete genomic sequences of Rd and 12 clinical nontypeable strains.</title>
        <authorList>
            <person name="Hogg J.S."/>
            <person name="Hu F.Z."/>
            <person name="Janto B."/>
            <person name="Boissy R."/>
            <person name="Hayes J."/>
            <person name="Keefe R."/>
            <person name="Post J.C."/>
            <person name="Ehrlich G.D."/>
        </authorList>
    </citation>
    <scope>NUCLEOTIDE SEQUENCE [LARGE SCALE GENOMIC DNA]</scope>
    <source>
        <strain>PittGG</strain>
    </source>
</reference>
<keyword id="KW-0997">Cell inner membrane</keyword>
<keyword id="KW-1003">Cell membrane</keyword>
<keyword id="KW-0444">Lipid biosynthesis</keyword>
<keyword id="KW-0443">Lipid metabolism</keyword>
<keyword id="KW-0472">Membrane</keyword>
<keyword id="KW-0594">Phospholipid biosynthesis</keyword>
<keyword id="KW-1208">Phospholipid metabolism</keyword>
<keyword id="KW-0808">Transferase</keyword>
<keyword id="KW-0812">Transmembrane</keyword>
<keyword id="KW-1133">Transmembrane helix</keyword>
<gene>
    <name evidence="1" type="primary">plsY</name>
    <name type="ordered locus">CGSHiGG_04120</name>
</gene>
<protein>
    <recommendedName>
        <fullName evidence="1">Glycerol-3-phosphate acyltransferase</fullName>
    </recommendedName>
    <alternativeName>
        <fullName evidence="1">Acyl-PO4 G3P acyltransferase</fullName>
    </alternativeName>
    <alternativeName>
        <fullName evidence="1">Acyl-phosphate--glycerol-3-phosphate acyltransferase</fullName>
    </alternativeName>
    <alternativeName>
        <fullName evidence="1">G3P acyltransferase</fullName>
        <shortName evidence="1">GPAT</shortName>
        <ecNumber evidence="1">2.3.1.275</ecNumber>
    </alternativeName>
    <alternativeName>
        <fullName evidence="1">Lysophosphatidic acid synthase</fullName>
        <shortName evidence="1">LPA synthase</shortName>
    </alternativeName>
</protein>
<sequence>MSLFALFYMLFAYLLGSISSAILICRIAGLPDPRQNGSHNPGATNVLRIGNRKSALAVLIFDMLKGMIPVWAGYYLGLTQFELGMVALGACLGHIFPIFFQFKGGKGVATAFGAIAPISWAVAGSMFGTWIFVFLVSGYSSLSAVISALLVPFYVWWFKPEFTFPVALVCCLLIYRHHDNIQRLWRGQEDKVWAKFKKK</sequence>
<proteinExistence type="inferred from homology"/>
<dbReference type="EC" id="2.3.1.275" evidence="1"/>
<dbReference type="EMBL" id="CP000672">
    <property type="protein sequence ID" value="ABQ99791.1"/>
    <property type="molecule type" value="Genomic_DNA"/>
</dbReference>
<dbReference type="SMR" id="A5UG86"/>
<dbReference type="KEGG" id="hiq:CGSHiGG_04120"/>
<dbReference type="HOGENOM" id="CLU_081254_0_2_6"/>
<dbReference type="UniPathway" id="UPA00085"/>
<dbReference type="Proteomes" id="UP000001990">
    <property type="component" value="Chromosome"/>
</dbReference>
<dbReference type="GO" id="GO:0005886">
    <property type="term" value="C:plasma membrane"/>
    <property type="evidence" value="ECO:0007669"/>
    <property type="project" value="UniProtKB-SubCell"/>
</dbReference>
<dbReference type="GO" id="GO:0043772">
    <property type="term" value="F:acyl-phosphate glycerol-3-phosphate acyltransferase activity"/>
    <property type="evidence" value="ECO:0007669"/>
    <property type="project" value="UniProtKB-UniRule"/>
</dbReference>
<dbReference type="GO" id="GO:0008654">
    <property type="term" value="P:phospholipid biosynthetic process"/>
    <property type="evidence" value="ECO:0007669"/>
    <property type="project" value="UniProtKB-UniRule"/>
</dbReference>
<dbReference type="HAMAP" id="MF_01043">
    <property type="entry name" value="PlsY"/>
    <property type="match status" value="1"/>
</dbReference>
<dbReference type="InterPro" id="IPR003811">
    <property type="entry name" value="G3P_acylTferase_PlsY"/>
</dbReference>
<dbReference type="NCBIfam" id="TIGR00023">
    <property type="entry name" value="glycerol-3-phosphate 1-O-acyltransferase PlsY"/>
    <property type="match status" value="1"/>
</dbReference>
<dbReference type="PANTHER" id="PTHR30309:SF0">
    <property type="entry name" value="GLYCEROL-3-PHOSPHATE ACYLTRANSFERASE-RELATED"/>
    <property type="match status" value="1"/>
</dbReference>
<dbReference type="PANTHER" id="PTHR30309">
    <property type="entry name" value="INNER MEMBRANE PROTEIN YGIH"/>
    <property type="match status" value="1"/>
</dbReference>
<dbReference type="Pfam" id="PF02660">
    <property type="entry name" value="G3P_acyltransf"/>
    <property type="match status" value="1"/>
</dbReference>
<dbReference type="SMART" id="SM01207">
    <property type="entry name" value="G3P_acyltransf"/>
    <property type="match status" value="1"/>
</dbReference>